<geneLocation type="plasmid">
    <name>p42f</name>
</geneLocation>
<reference key="1">
    <citation type="journal article" date="1998" name="Gene">
        <title>Rhizobium etli cycHJKL gene locus involved in c-type cytochrome biogenesis: sequence analysis and characterization of two cycH mutants.</title>
        <authorList>
            <person name="Tabche M.-L."/>
            <person name="Garcia E.G."/>
            <person name="Miranda J."/>
            <person name="Escamilla J.E."/>
            <person name="Soberon M."/>
        </authorList>
    </citation>
    <scope>NUCLEOTIDE SEQUENCE [GENOMIC DNA]</scope>
    <source>
        <strain>ATCC 51251 / DSM 11541 / JCM 21823 / NBRC 15573 / CFN 42</strain>
    </source>
</reference>
<reference key="2">
    <citation type="journal article" date="2000" name="Gene">
        <title>Expression pattern of Rhizobium etli ccmIEFH genes involved in c-type cytochrome maturation.</title>
        <authorList>
            <person name="Reyes J.D."/>
            <person name="Tabche M.-L."/>
            <person name="Morera C."/>
            <person name="de Lourdes Girard M."/>
            <person name="Romero D."/>
            <person name="Krol E."/>
            <person name="Miranda J."/>
            <person name="Soberon M."/>
        </authorList>
    </citation>
    <scope>NUCLEOTIDE SEQUENCE [GENOMIC DNA]</scope>
    <source>
        <strain>CE3</strain>
    </source>
</reference>
<reference key="3">
    <citation type="journal article" date="2006" name="Proc. Natl. Acad. Sci. U.S.A.">
        <title>The partitioned Rhizobium etli genome: genetic and metabolic redundancy in seven interacting replicons.</title>
        <authorList>
            <person name="Gonzalez V."/>
            <person name="Santamaria R.I."/>
            <person name="Bustos P."/>
            <person name="Hernandez-Gonzalez I."/>
            <person name="Medrano-Soto A."/>
            <person name="Moreno-Hagelsieb G."/>
            <person name="Janga S.C."/>
            <person name="Ramirez M.A."/>
            <person name="Jimenez-Jacinto V."/>
            <person name="Collado-Vides J."/>
            <person name="Davila G."/>
        </authorList>
    </citation>
    <scope>NUCLEOTIDE SEQUENCE [LARGE SCALE GENOMIC DNA]</scope>
    <source>
        <strain>ATCC 51251 / DSM 11541 / JCM 21823 / NBRC 15573 / CFN 42</strain>
    </source>
</reference>
<keyword id="KW-0997">Cell inner membrane</keyword>
<keyword id="KW-1003">Cell membrane</keyword>
<keyword id="KW-0201">Cytochrome c-type biogenesis</keyword>
<keyword id="KW-0349">Heme</keyword>
<keyword id="KW-0408">Iron</keyword>
<keyword id="KW-0472">Membrane</keyword>
<keyword id="KW-0479">Metal-binding</keyword>
<keyword id="KW-0614">Plasmid</keyword>
<keyword id="KW-1185">Reference proteome</keyword>
<keyword id="KW-0735">Signal-anchor</keyword>
<keyword id="KW-0812">Transmembrane</keyword>
<keyword id="KW-1133">Transmembrane helix</keyword>
<name>CCME_RHIEC</name>
<comment type="function">
    <text evidence="1">Heme chaperone required for the biogenesis of c-type cytochromes. Transiently binds heme delivered by CcmC and transfers the heme to apo-cytochromes in a process facilitated by CcmF and CcmH.</text>
</comment>
<comment type="subcellular location">
    <subcellularLocation>
        <location evidence="1">Cell inner membrane</location>
        <topology evidence="1">Single-pass type II membrane protein</topology>
        <orientation evidence="1">Periplasmic side</orientation>
    </subcellularLocation>
</comment>
<comment type="similarity">
    <text evidence="1">Belongs to the CcmE/CycJ family.</text>
</comment>
<evidence type="ECO:0000255" key="1">
    <source>
        <dbReference type="HAMAP-Rule" id="MF_01959"/>
    </source>
</evidence>
<evidence type="ECO:0000305" key="2"/>
<feature type="chain" id="PRO_0000238848" description="Cytochrome c-type biogenesis protein CcmE">
    <location>
        <begin position="1"/>
        <end position="155"/>
    </location>
</feature>
<feature type="topological domain" description="Cytoplasmic" evidence="1">
    <location>
        <begin position="1"/>
        <end position="7"/>
    </location>
</feature>
<feature type="transmembrane region" description="Helical; Signal-anchor for type II membrane protein" evidence="1">
    <location>
        <begin position="8"/>
        <end position="28"/>
    </location>
</feature>
<feature type="topological domain" description="Periplasmic" evidence="1">
    <location>
        <begin position="29"/>
        <end position="155"/>
    </location>
</feature>
<feature type="binding site" description="covalent" evidence="1">
    <location>
        <position position="124"/>
    </location>
    <ligand>
        <name>heme</name>
        <dbReference type="ChEBI" id="CHEBI:30413"/>
    </ligand>
</feature>
<feature type="binding site" description="axial binding residue" evidence="1">
    <location>
        <position position="128"/>
    </location>
    <ligand>
        <name>heme</name>
        <dbReference type="ChEBI" id="CHEBI:30413"/>
    </ligand>
    <ligandPart>
        <name>Fe</name>
        <dbReference type="ChEBI" id="CHEBI:18248"/>
    </ligandPart>
</feature>
<feature type="sequence conflict" description="In Ref. 2; AAF00988." evidence="2" ref="2">
    <original>AAV</original>
    <variation>VAL</variation>
    <location>
        <begin position="20"/>
        <end position="22"/>
    </location>
</feature>
<feature type="sequence conflict" description="In Ref. 2; AAF00988." evidence="2" ref="2">
    <original>A</original>
    <variation>P</variation>
    <location>
        <position position="28"/>
    </location>
</feature>
<feature type="sequence conflict" description="In Ref. 2; AAF00988." evidence="2" ref="2">
    <original>A</original>
    <variation>P</variation>
    <location>
        <position position="34"/>
    </location>
</feature>
<feature type="sequence conflict" description="In Ref. 2; AAF00988." evidence="2" ref="2">
    <original>V</original>
    <variation>L</variation>
    <location>
        <position position="47"/>
    </location>
</feature>
<feature type="sequence conflict" description="In Ref. 2; AAC46237." evidence="2" ref="2">
    <location>
        <position position="49"/>
    </location>
</feature>
<feature type="sequence conflict" description="In Ref. 2; AAC46237." evidence="2" ref="2">
    <location>
        <position position="112"/>
    </location>
</feature>
<gene>
    <name evidence="1" type="primary">ccmE1</name>
    <name evidence="1" type="synonym">cycJ1</name>
    <name type="ordered locus">RHE_CH01290</name>
</gene>
<gene>
    <name evidence="1" type="primary">ccmE2</name>
    <name evidence="1" type="synonym">cycJ2</name>
    <name type="ordered locus">RHE_PF00497</name>
</gene>
<dbReference type="EMBL" id="U45318">
    <property type="protein sequence ID" value="AAC46237.1"/>
    <property type="molecule type" value="Genomic_DNA"/>
</dbReference>
<dbReference type="EMBL" id="AF176798">
    <property type="protein sequence ID" value="AAF00988.1"/>
    <property type="molecule type" value="Genomic_DNA"/>
</dbReference>
<dbReference type="EMBL" id="CP000138">
    <property type="protein sequence ID" value="ABC94386.1"/>
    <property type="molecule type" value="Genomic_DNA"/>
</dbReference>
<dbReference type="EMBL" id="CP000133">
    <property type="protein sequence ID" value="ABC90095.1"/>
    <property type="molecule type" value="Genomic_DNA"/>
</dbReference>
<dbReference type="RefSeq" id="WP_011424629.1">
    <property type="nucleotide sequence ID" value="NC_007761.1"/>
</dbReference>
<dbReference type="SMR" id="Q2JYF0"/>
<dbReference type="KEGG" id="ret:RHE_CH01290"/>
<dbReference type="KEGG" id="ret:RHE_PF00497"/>
<dbReference type="eggNOG" id="COG2332">
    <property type="taxonomic scope" value="Bacteria"/>
</dbReference>
<dbReference type="HOGENOM" id="CLU_079503_1_1_5"/>
<dbReference type="OrthoDB" id="9793584at2"/>
<dbReference type="Proteomes" id="UP000001936">
    <property type="component" value="Chromosome"/>
</dbReference>
<dbReference type="Proteomes" id="UP000001936">
    <property type="component" value="Plasmid p42f"/>
</dbReference>
<dbReference type="GO" id="GO:0005886">
    <property type="term" value="C:plasma membrane"/>
    <property type="evidence" value="ECO:0007669"/>
    <property type="project" value="UniProtKB-SubCell"/>
</dbReference>
<dbReference type="GO" id="GO:0020037">
    <property type="term" value="F:heme binding"/>
    <property type="evidence" value="ECO:0007669"/>
    <property type="project" value="InterPro"/>
</dbReference>
<dbReference type="GO" id="GO:0046872">
    <property type="term" value="F:metal ion binding"/>
    <property type="evidence" value="ECO:0007669"/>
    <property type="project" value="UniProtKB-KW"/>
</dbReference>
<dbReference type="GO" id="GO:0017004">
    <property type="term" value="P:cytochrome complex assembly"/>
    <property type="evidence" value="ECO:0007669"/>
    <property type="project" value="UniProtKB-KW"/>
</dbReference>
<dbReference type="Gene3D" id="2.40.50.140">
    <property type="entry name" value="Nucleic acid-binding proteins"/>
    <property type="match status" value="1"/>
</dbReference>
<dbReference type="HAMAP" id="MF_01959">
    <property type="entry name" value="CcmE"/>
    <property type="match status" value="1"/>
</dbReference>
<dbReference type="InterPro" id="IPR004329">
    <property type="entry name" value="CcmE"/>
</dbReference>
<dbReference type="InterPro" id="IPR036127">
    <property type="entry name" value="CcmE-like_sf"/>
</dbReference>
<dbReference type="InterPro" id="IPR012340">
    <property type="entry name" value="NA-bd_OB-fold"/>
</dbReference>
<dbReference type="NCBIfam" id="NF009727">
    <property type="entry name" value="PRK13254.1-1"/>
    <property type="match status" value="1"/>
</dbReference>
<dbReference type="NCBIfam" id="NF009731">
    <property type="entry name" value="PRK13254.1-5"/>
    <property type="match status" value="1"/>
</dbReference>
<dbReference type="PANTHER" id="PTHR34128">
    <property type="entry name" value="CYTOCHROME C-TYPE BIOGENESIS PROTEIN CCME HOMOLOG, MITOCHONDRIAL"/>
    <property type="match status" value="1"/>
</dbReference>
<dbReference type="PANTHER" id="PTHR34128:SF2">
    <property type="entry name" value="CYTOCHROME C-TYPE BIOGENESIS PROTEIN CCME HOMOLOG, MITOCHONDRIAL"/>
    <property type="match status" value="1"/>
</dbReference>
<dbReference type="Pfam" id="PF03100">
    <property type="entry name" value="CcmE"/>
    <property type="match status" value="1"/>
</dbReference>
<dbReference type="SUPFAM" id="SSF82093">
    <property type="entry name" value="Heme chaperone CcmE"/>
    <property type="match status" value="1"/>
</dbReference>
<organism>
    <name type="scientific">Rhizobium etli (strain ATCC 51251 / DSM 11541 / JCM 21823 / NBRC 15573 / CFN 42)</name>
    <dbReference type="NCBI Taxonomy" id="347834"/>
    <lineage>
        <taxon>Bacteria</taxon>
        <taxon>Pseudomonadati</taxon>
        <taxon>Pseudomonadota</taxon>
        <taxon>Alphaproteobacteria</taxon>
        <taxon>Hyphomicrobiales</taxon>
        <taxon>Rhizobiaceae</taxon>
        <taxon>Rhizobium/Agrobacterium group</taxon>
        <taxon>Rhizobium</taxon>
    </lineage>
</organism>
<sequence length="155" mass="16488">MTRKQKRLVVIAGGMSFILAAVLLVMFAFSQSVAYFYMPADLARTPVAPETRIRLGGLVGAGSVVRGAGSTVEFSVTDGSANAVKVKYTGILPDLFREGQGVVTEGMFAAGSNVFIADTVLAKHDETYMPKEVADRLKSQGLWQEGKGQEAKATP</sequence>
<protein>
    <recommendedName>
        <fullName evidence="1">Cytochrome c-type biogenesis protein CcmE</fullName>
    </recommendedName>
    <alternativeName>
        <fullName evidence="1">Cytochrome c maturation protein E</fullName>
    </alternativeName>
    <alternativeName>
        <fullName evidence="1">Heme chaperone CcmE</fullName>
    </alternativeName>
</protein>
<accession>Q2JYF0</accession>
<accession>Q52731</accession>
<accession>Q9RNX4</accession>
<proteinExistence type="inferred from homology"/>